<reference key="1">
    <citation type="journal article" date="2001" name="J. Bacteriol.">
        <title>Genome sequence and comparative analysis of the solvent-producing bacterium Clostridium acetobutylicum.</title>
        <authorList>
            <person name="Noelling J."/>
            <person name="Breton G."/>
            <person name="Omelchenko M.V."/>
            <person name="Makarova K.S."/>
            <person name="Zeng Q."/>
            <person name="Gibson R."/>
            <person name="Lee H.M."/>
            <person name="Dubois J."/>
            <person name="Qiu D."/>
            <person name="Hitti J."/>
            <person name="Wolf Y.I."/>
            <person name="Tatusov R.L."/>
            <person name="Sabathe F."/>
            <person name="Doucette-Stamm L.A."/>
            <person name="Soucaille P."/>
            <person name="Daly M.J."/>
            <person name="Bennett G.N."/>
            <person name="Koonin E.V."/>
            <person name="Smith D.R."/>
        </authorList>
    </citation>
    <scope>NUCLEOTIDE SEQUENCE [LARGE SCALE GENOMIC DNA]</scope>
    <source>
        <strain>ATCC 824 / DSM 792 / JCM 1419 / IAM 19013 / LMG 5710 / NBRC 13948 / NRRL B-527 / VKM B-1787 / 2291 / W</strain>
    </source>
</reference>
<sequence>MARDNGNKDRDGKRPNGGRNRKMKRKICSFCMEKSESIDYKDINKLRKYVTERGKILPRRISGNCAKHQRELTIAIKRARNIALLPFTTE</sequence>
<proteinExistence type="inferred from homology"/>
<evidence type="ECO:0000255" key="1">
    <source>
        <dbReference type="HAMAP-Rule" id="MF_00270"/>
    </source>
</evidence>
<evidence type="ECO:0000256" key="2">
    <source>
        <dbReference type="SAM" id="MobiDB-lite"/>
    </source>
</evidence>
<evidence type="ECO:0000305" key="3"/>
<name>RS18_CLOAB</name>
<keyword id="KW-1185">Reference proteome</keyword>
<keyword id="KW-0687">Ribonucleoprotein</keyword>
<keyword id="KW-0689">Ribosomal protein</keyword>
<keyword id="KW-0694">RNA-binding</keyword>
<keyword id="KW-0699">rRNA-binding</keyword>
<accession>Q97CX4</accession>
<organism>
    <name type="scientific">Clostridium acetobutylicum (strain ATCC 824 / DSM 792 / JCM 1419 / IAM 19013 / LMG 5710 / NBRC 13948 / NRRL B-527 / VKM B-1787 / 2291 / W)</name>
    <dbReference type="NCBI Taxonomy" id="272562"/>
    <lineage>
        <taxon>Bacteria</taxon>
        <taxon>Bacillati</taxon>
        <taxon>Bacillota</taxon>
        <taxon>Clostridia</taxon>
        <taxon>Eubacteriales</taxon>
        <taxon>Clostridiaceae</taxon>
        <taxon>Clostridium</taxon>
    </lineage>
</organism>
<feature type="chain" id="PRO_0000111144" description="Small ribosomal subunit protein bS18">
    <location>
        <begin position="1"/>
        <end position="90"/>
    </location>
</feature>
<feature type="region of interest" description="Disordered" evidence="2">
    <location>
        <begin position="1"/>
        <end position="23"/>
    </location>
</feature>
<feature type="compositionally biased region" description="Basic and acidic residues" evidence="2">
    <location>
        <begin position="1"/>
        <end position="14"/>
    </location>
</feature>
<comment type="function">
    <text evidence="1">Binds as a heterodimer with protein bS6 to the central domain of the 16S rRNA, where it helps stabilize the platform of the 30S subunit.</text>
</comment>
<comment type="subunit">
    <text evidence="1">Part of the 30S ribosomal subunit. Forms a tight heterodimer with protein bS6.</text>
</comment>
<comment type="similarity">
    <text evidence="1">Belongs to the bacterial ribosomal protein bS18 family.</text>
</comment>
<gene>
    <name evidence="1" type="primary">rpsR</name>
    <name type="ordered locus">CA_C3722</name>
</gene>
<protein>
    <recommendedName>
        <fullName evidence="1">Small ribosomal subunit protein bS18</fullName>
    </recommendedName>
    <alternativeName>
        <fullName evidence="3">30S ribosomal protein S18</fullName>
    </alternativeName>
</protein>
<dbReference type="EMBL" id="AE001437">
    <property type="protein sequence ID" value="AAK81642.1"/>
    <property type="molecule type" value="Genomic_DNA"/>
</dbReference>
<dbReference type="PIR" id="G97356">
    <property type="entry name" value="G97356"/>
</dbReference>
<dbReference type="RefSeq" id="NP_350302.1">
    <property type="nucleotide sequence ID" value="NC_003030.1"/>
</dbReference>
<dbReference type="RefSeq" id="WP_010966982.1">
    <property type="nucleotide sequence ID" value="NC_003030.1"/>
</dbReference>
<dbReference type="SMR" id="Q97CX4"/>
<dbReference type="STRING" id="272562.CA_C3722"/>
<dbReference type="GeneID" id="45000218"/>
<dbReference type="KEGG" id="cac:CA_C3722"/>
<dbReference type="PATRIC" id="fig|272562.8.peg.3911"/>
<dbReference type="eggNOG" id="COG0238">
    <property type="taxonomic scope" value="Bacteria"/>
</dbReference>
<dbReference type="HOGENOM" id="CLU_148710_0_3_9"/>
<dbReference type="OrthoDB" id="9812008at2"/>
<dbReference type="Proteomes" id="UP000000814">
    <property type="component" value="Chromosome"/>
</dbReference>
<dbReference type="GO" id="GO:0022627">
    <property type="term" value="C:cytosolic small ribosomal subunit"/>
    <property type="evidence" value="ECO:0007669"/>
    <property type="project" value="TreeGrafter"/>
</dbReference>
<dbReference type="GO" id="GO:0070181">
    <property type="term" value="F:small ribosomal subunit rRNA binding"/>
    <property type="evidence" value="ECO:0007669"/>
    <property type="project" value="TreeGrafter"/>
</dbReference>
<dbReference type="GO" id="GO:0003735">
    <property type="term" value="F:structural constituent of ribosome"/>
    <property type="evidence" value="ECO:0007669"/>
    <property type="project" value="InterPro"/>
</dbReference>
<dbReference type="GO" id="GO:0006412">
    <property type="term" value="P:translation"/>
    <property type="evidence" value="ECO:0007669"/>
    <property type="project" value="UniProtKB-UniRule"/>
</dbReference>
<dbReference type="FunFam" id="4.10.640.10:FF:000004">
    <property type="entry name" value="30S ribosomal protein S18"/>
    <property type="match status" value="1"/>
</dbReference>
<dbReference type="Gene3D" id="4.10.640.10">
    <property type="entry name" value="Ribosomal protein S18"/>
    <property type="match status" value="1"/>
</dbReference>
<dbReference type="HAMAP" id="MF_00270">
    <property type="entry name" value="Ribosomal_bS18"/>
    <property type="match status" value="1"/>
</dbReference>
<dbReference type="InterPro" id="IPR001648">
    <property type="entry name" value="Ribosomal_bS18"/>
</dbReference>
<dbReference type="InterPro" id="IPR018275">
    <property type="entry name" value="Ribosomal_bS18_CS"/>
</dbReference>
<dbReference type="InterPro" id="IPR036870">
    <property type="entry name" value="Ribosomal_bS18_sf"/>
</dbReference>
<dbReference type="NCBIfam" id="TIGR00165">
    <property type="entry name" value="S18"/>
    <property type="match status" value="1"/>
</dbReference>
<dbReference type="PANTHER" id="PTHR13479">
    <property type="entry name" value="30S RIBOSOMAL PROTEIN S18"/>
    <property type="match status" value="1"/>
</dbReference>
<dbReference type="PANTHER" id="PTHR13479:SF40">
    <property type="entry name" value="SMALL RIBOSOMAL SUBUNIT PROTEIN BS18M"/>
    <property type="match status" value="1"/>
</dbReference>
<dbReference type="Pfam" id="PF01084">
    <property type="entry name" value="Ribosomal_S18"/>
    <property type="match status" value="1"/>
</dbReference>
<dbReference type="PRINTS" id="PR00974">
    <property type="entry name" value="RIBOSOMALS18"/>
</dbReference>
<dbReference type="SUPFAM" id="SSF46911">
    <property type="entry name" value="Ribosomal protein S18"/>
    <property type="match status" value="1"/>
</dbReference>
<dbReference type="PROSITE" id="PS00057">
    <property type="entry name" value="RIBOSOMAL_S18"/>
    <property type="match status" value="1"/>
</dbReference>